<proteinExistence type="inferred from homology"/>
<evidence type="ECO:0000255" key="1">
    <source>
        <dbReference type="HAMAP-Rule" id="MF_00056"/>
    </source>
</evidence>
<dbReference type="EC" id="2.5.1.55" evidence="1"/>
<dbReference type="EMBL" id="CP000453">
    <property type="protein sequence ID" value="ABI57184.1"/>
    <property type="molecule type" value="Genomic_DNA"/>
</dbReference>
<dbReference type="RefSeq" id="WP_011629578.1">
    <property type="nucleotide sequence ID" value="NC_008340.1"/>
</dbReference>
<dbReference type="SMR" id="Q0A7K3"/>
<dbReference type="KEGG" id="aeh:Mlg_1840"/>
<dbReference type="eggNOG" id="COG2877">
    <property type="taxonomic scope" value="Bacteria"/>
</dbReference>
<dbReference type="HOGENOM" id="CLU_036666_0_0_6"/>
<dbReference type="OrthoDB" id="9776934at2"/>
<dbReference type="UniPathway" id="UPA00030"/>
<dbReference type="UniPathway" id="UPA00357">
    <property type="reaction ID" value="UER00474"/>
</dbReference>
<dbReference type="Proteomes" id="UP000001962">
    <property type="component" value="Chromosome"/>
</dbReference>
<dbReference type="GO" id="GO:0005737">
    <property type="term" value="C:cytoplasm"/>
    <property type="evidence" value="ECO:0007669"/>
    <property type="project" value="UniProtKB-SubCell"/>
</dbReference>
<dbReference type="GO" id="GO:0008676">
    <property type="term" value="F:3-deoxy-8-phosphooctulonate synthase activity"/>
    <property type="evidence" value="ECO:0007669"/>
    <property type="project" value="UniProtKB-UniRule"/>
</dbReference>
<dbReference type="GO" id="GO:0019294">
    <property type="term" value="P:keto-3-deoxy-D-manno-octulosonic acid biosynthetic process"/>
    <property type="evidence" value="ECO:0007669"/>
    <property type="project" value="UniProtKB-UniRule"/>
</dbReference>
<dbReference type="Gene3D" id="3.20.20.70">
    <property type="entry name" value="Aldolase class I"/>
    <property type="match status" value="1"/>
</dbReference>
<dbReference type="HAMAP" id="MF_00056">
    <property type="entry name" value="KDO8P_synth"/>
    <property type="match status" value="1"/>
</dbReference>
<dbReference type="InterPro" id="IPR013785">
    <property type="entry name" value="Aldolase_TIM"/>
</dbReference>
<dbReference type="InterPro" id="IPR006218">
    <property type="entry name" value="DAHP1/KDSA"/>
</dbReference>
<dbReference type="InterPro" id="IPR006269">
    <property type="entry name" value="KDO8P_synthase"/>
</dbReference>
<dbReference type="NCBIfam" id="TIGR01362">
    <property type="entry name" value="KDO8P_synth"/>
    <property type="match status" value="1"/>
</dbReference>
<dbReference type="NCBIfam" id="NF003543">
    <property type="entry name" value="PRK05198.1"/>
    <property type="match status" value="1"/>
</dbReference>
<dbReference type="PANTHER" id="PTHR21057">
    <property type="entry name" value="PHOSPHO-2-DEHYDRO-3-DEOXYHEPTONATE ALDOLASE"/>
    <property type="match status" value="1"/>
</dbReference>
<dbReference type="Pfam" id="PF00793">
    <property type="entry name" value="DAHP_synth_1"/>
    <property type="match status" value="1"/>
</dbReference>
<dbReference type="SUPFAM" id="SSF51569">
    <property type="entry name" value="Aldolase"/>
    <property type="match status" value="1"/>
</dbReference>
<organism>
    <name type="scientific">Alkalilimnicola ehrlichii (strain ATCC BAA-1101 / DSM 17681 / MLHE-1)</name>
    <dbReference type="NCBI Taxonomy" id="187272"/>
    <lineage>
        <taxon>Bacteria</taxon>
        <taxon>Pseudomonadati</taxon>
        <taxon>Pseudomonadota</taxon>
        <taxon>Gammaproteobacteria</taxon>
        <taxon>Chromatiales</taxon>
        <taxon>Ectothiorhodospiraceae</taxon>
        <taxon>Alkalilimnicola</taxon>
    </lineage>
</organism>
<accession>Q0A7K3</accession>
<protein>
    <recommendedName>
        <fullName evidence="1">2-dehydro-3-deoxyphosphooctonate aldolase</fullName>
        <ecNumber evidence="1">2.5.1.55</ecNumber>
    </recommendedName>
    <alternativeName>
        <fullName evidence="1">3-deoxy-D-manno-octulosonic acid 8-phosphate synthase</fullName>
    </alternativeName>
    <alternativeName>
        <fullName evidence="1">KDO-8-phosphate synthase</fullName>
        <shortName evidence="1">KDO 8-P synthase</shortName>
        <shortName evidence="1">KDOPS</shortName>
    </alternativeName>
    <alternativeName>
        <fullName evidence="1">Phospho-2-dehydro-3-deoxyoctonate aldolase</fullName>
    </alternativeName>
</protein>
<reference key="1">
    <citation type="submission" date="2006-08" db="EMBL/GenBank/DDBJ databases">
        <title>Complete sequence of Alkalilimnicola ehrilichei MLHE-1.</title>
        <authorList>
            <person name="Copeland A."/>
            <person name="Lucas S."/>
            <person name="Lapidus A."/>
            <person name="Barry K."/>
            <person name="Detter J.C."/>
            <person name="Glavina del Rio T."/>
            <person name="Hammon N."/>
            <person name="Israni S."/>
            <person name="Dalin E."/>
            <person name="Tice H."/>
            <person name="Pitluck S."/>
            <person name="Sims D."/>
            <person name="Brettin T."/>
            <person name="Bruce D."/>
            <person name="Han C."/>
            <person name="Tapia R."/>
            <person name="Gilna P."/>
            <person name="Schmutz J."/>
            <person name="Larimer F."/>
            <person name="Land M."/>
            <person name="Hauser L."/>
            <person name="Kyrpides N."/>
            <person name="Mikhailova N."/>
            <person name="Oremland R.S."/>
            <person name="Hoeft S.E."/>
            <person name="Switzer-Blum J."/>
            <person name="Kulp T."/>
            <person name="King G."/>
            <person name="Tabita R."/>
            <person name="Witte B."/>
            <person name="Santini J.M."/>
            <person name="Basu P."/>
            <person name="Hollibaugh J.T."/>
            <person name="Xie G."/>
            <person name="Stolz J.F."/>
            <person name="Richardson P."/>
        </authorList>
    </citation>
    <scope>NUCLEOTIDE SEQUENCE [LARGE SCALE GENOMIC DNA]</scope>
    <source>
        <strain>ATCC BAA-1101 / DSM 17681 / MLHE-1</strain>
    </source>
</reference>
<sequence>MDLCGFRVGLDRPLFLIAGPCVVESEQLALDTAGALAEMTGELGIPFIYKSSFDKANRSSHESYRGPGLEAGLRVLEQVRRQIGVPVITDVHEDTPLVEVASVVDVLQTPAFLCRQTNFIQNVARQGRPVNIKKGQFLAPWDMRHVVAKAREAGNQQIMVCERGVSFGYNNLVSDMRALAVMRETGAPVVFDATHSVQLPGGQGSASGGQREFVPVLARAAVAAGVAGLFMETHPDPDQALSDGPNAWPLERMRELLETLMELDQVVKGRGFTEQGL</sequence>
<keyword id="KW-0963">Cytoplasm</keyword>
<keyword id="KW-0448">Lipopolysaccharide biosynthesis</keyword>
<keyword id="KW-1185">Reference proteome</keyword>
<keyword id="KW-0808">Transferase</keyword>
<gene>
    <name evidence="1" type="primary">kdsA</name>
    <name type="ordered locus">Mlg_1840</name>
</gene>
<name>KDSA_ALKEH</name>
<feature type="chain" id="PRO_0000304429" description="2-dehydro-3-deoxyphosphooctonate aldolase">
    <location>
        <begin position="1"/>
        <end position="277"/>
    </location>
</feature>
<comment type="catalytic activity">
    <reaction evidence="1">
        <text>D-arabinose 5-phosphate + phosphoenolpyruvate + H2O = 3-deoxy-alpha-D-manno-2-octulosonate-8-phosphate + phosphate</text>
        <dbReference type="Rhea" id="RHEA:14053"/>
        <dbReference type="ChEBI" id="CHEBI:15377"/>
        <dbReference type="ChEBI" id="CHEBI:43474"/>
        <dbReference type="ChEBI" id="CHEBI:57693"/>
        <dbReference type="ChEBI" id="CHEBI:58702"/>
        <dbReference type="ChEBI" id="CHEBI:85985"/>
        <dbReference type="EC" id="2.5.1.55"/>
    </reaction>
</comment>
<comment type="pathway">
    <text evidence="1">Carbohydrate biosynthesis; 3-deoxy-D-manno-octulosonate biosynthesis; 3-deoxy-D-manno-octulosonate from D-ribulose 5-phosphate: step 2/3.</text>
</comment>
<comment type="pathway">
    <text evidence="1">Bacterial outer membrane biogenesis; lipopolysaccharide biosynthesis.</text>
</comment>
<comment type="subcellular location">
    <subcellularLocation>
        <location evidence="1">Cytoplasm</location>
    </subcellularLocation>
</comment>
<comment type="similarity">
    <text evidence="1">Belongs to the KdsA family.</text>
</comment>